<evidence type="ECO:0000255" key="1">
    <source>
        <dbReference type="HAMAP-Rule" id="MF_01343"/>
    </source>
</evidence>
<evidence type="ECO:0000305" key="2"/>
<comment type="function">
    <text evidence="1">One of the primary rRNA binding proteins, it binds directly to 16S rRNA where it helps nucleate assembly of the platform of the 30S subunit by binding and bridging several RNA helices of the 16S rRNA.</text>
</comment>
<comment type="function">
    <text evidence="1">Forms an intersubunit bridge (bridge B4) with the 23S rRNA of the 50S subunit in the ribosome.</text>
</comment>
<comment type="subunit">
    <text evidence="1">Part of the 30S ribosomal subunit. Forms a bridge to the 50S subunit in the 70S ribosome, contacting the 23S rRNA.</text>
</comment>
<comment type="similarity">
    <text evidence="1">Belongs to the universal ribosomal protein uS15 family.</text>
</comment>
<gene>
    <name evidence="1" type="primary">rpsO</name>
    <name type="ordered locus">TGRD_166</name>
</gene>
<sequence length="86" mass="10210">MTFEKKTVVDQFKVHATDTGSSEVQIAILTTRIKYLSDHFKKFPKDFASRVGFLKMIGQRRQLLDYLKKYNKDSYSSLIKRLYLRK</sequence>
<name>RS15_ENDTX</name>
<keyword id="KW-0687">Ribonucleoprotein</keyword>
<keyword id="KW-0689">Ribosomal protein</keyword>
<keyword id="KW-0694">RNA-binding</keyword>
<keyword id="KW-0699">rRNA-binding</keyword>
<reference key="1">
    <citation type="journal article" date="2008" name="Proc. Natl. Acad. Sci. U.S.A.">
        <title>Complete genome of the uncultured termite group 1 bacteria in a single host protist cell.</title>
        <authorList>
            <person name="Hongoh Y."/>
            <person name="Sharma V.K."/>
            <person name="Prakash T."/>
            <person name="Noda S."/>
            <person name="Taylor T.D."/>
            <person name="Kudo T."/>
            <person name="Sakaki Y."/>
            <person name="Toyoda A."/>
            <person name="Hattori M."/>
            <person name="Ohkuma M."/>
        </authorList>
    </citation>
    <scope>NUCLEOTIDE SEQUENCE [LARGE SCALE GENOMIC DNA]</scope>
</reference>
<proteinExistence type="inferred from homology"/>
<protein>
    <recommendedName>
        <fullName evidence="1">Small ribosomal subunit protein uS15</fullName>
    </recommendedName>
    <alternativeName>
        <fullName evidence="2">30S ribosomal protein S15</fullName>
    </alternativeName>
</protein>
<organism>
    <name type="scientific">Endomicrobium trichonymphae</name>
    <dbReference type="NCBI Taxonomy" id="1408204"/>
    <lineage>
        <taxon>Bacteria</taxon>
        <taxon>Pseudomonadati</taxon>
        <taxon>Elusimicrobiota</taxon>
        <taxon>Endomicrobiia</taxon>
        <taxon>Endomicrobiales</taxon>
        <taxon>Endomicrobiaceae</taxon>
        <taxon>Candidatus Endomicrobiellum</taxon>
    </lineage>
</organism>
<dbReference type="EMBL" id="AP009510">
    <property type="protein sequence ID" value="BAG13649.1"/>
    <property type="molecule type" value="Genomic_DNA"/>
</dbReference>
<dbReference type="RefSeq" id="WP_015423177.1">
    <property type="nucleotide sequence ID" value="NC_020419.1"/>
</dbReference>
<dbReference type="SMR" id="B1GZG7"/>
<dbReference type="STRING" id="471821.TGRD_166"/>
<dbReference type="KEGG" id="eti:RSTT_144"/>
<dbReference type="KEGG" id="rsd:TGRD_166"/>
<dbReference type="PATRIC" id="fig|471821.5.peg.244"/>
<dbReference type="HOGENOM" id="CLU_148518_0_0_0"/>
<dbReference type="OrthoDB" id="9799262at2"/>
<dbReference type="Proteomes" id="UP000001691">
    <property type="component" value="Chromosome"/>
</dbReference>
<dbReference type="GO" id="GO:0022627">
    <property type="term" value="C:cytosolic small ribosomal subunit"/>
    <property type="evidence" value="ECO:0007669"/>
    <property type="project" value="TreeGrafter"/>
</dbReference>
<dbReference type="GO" id="GO:0019843">
    <property type="term" value="F:rRNA binding"/>
    <property type="evidence" value="ECO:0007669"/>
    <property type="project" value="UniProtKB-UniRule"/>
</dbReference>
<dbReference type="GO" id="GO:0003735">
    <property type="term" value="F:structural constituent of ribosome"/>
    <property type="evidence" value="ECO:0007669"/>
    <property type="project" value="InterPro"/>
</dbReference>
<dbReference type="GO" id="GO:0006412">
    <property type="term" value="P:translation"/>
    <property type="evidence" value="ECO:0007669"/>
    <property type="project" value="UniProtKB-UniRule"/>
</dbReference>
<dbReference type="CDD" id="cd00353">
    <property type="entry name" value="Ribosomal_S15p_S13e"/>
    <property type="match status" value="1"/>
</dbReference>
<dbReference type="FunFam" id="1.10.287.10:FF:000002">
    <property type="entry name" value="30S ribosomal protein S15"/>
    <property type="match status" value="1"/>
</dbReference>
<dbReference type="Gene3D" id="6.10.250.3130">
    <property type="match status" value="1"/>
</dbReference>
<dbReference type="Gene3D" id="1.10.287.10">
    <property type="entry name" value="S15/NS1, RNA-binding"/>
    <property type="match status" value="1"/>
</dbReference>
<dbReference type="HAMAP" id="MF_01343_B">
    <property type="entry name" value="Ribosomal_uS15_B"/>
    <property type="match status" value="1"/>
</dbReference>
<dbReference type="InterPro" id="IPR000589">
    <property type="entry name" value="Ribosomal_uS15"/>
</dbReference>
<dbReference type="InterPro" id="IPR005290">
    <property type="entry name" value="Ribosomal_uS15_bac-type"/>
</dbReference>
<dbReference type="InterPro" id="IPR009068">
    <property type="entry name" value="uS15_NS1_RNA-bd_sf"/>
</dbReference>
<dbReference type="NCBIfam" id="TIGR00952">
    <property type="entry name" value="S15_bact"/>
    <property type="match status" value="1"/>
</dbReference>
<dbReference type="PANTHER" id="PTHR23321">
    <property type="entry name" value="RIBOSOMAL PROTEIN S15, BACTERIAL AND ORGANELLAR"/>
    <property type="match status" value="1"/>
</dbReference>
<dbReference type="PANTHER" id="PTHR23321:SF26">
    <property type="entry name" value="SMALL RIBOSOMAL SUBUNIT PROTEIN US15M"/>
    <property type="match status" value="1"/>
</dbReference>
<dbReference type="Pfam" id="PF00312">
    <property type="entry name" value="Ribosomal_S15"/>
    <property type="match status" value="1"/>
</dbReference>
<dbReference type="SMART" id="SM01387">
    <property type="entry name" value="Ribosomal_S15"/>
    <property type="match status" value="1"/>
</dbReference>
<dbReference type="SUPFAM" id="SSF47060">
    <property type="entry name" value="S15/NS1 RNA-binding domain"/>
    <property type="match status" value="1"/>
</dbReference>
<dbReference type="PROSITE" id="PS00362">
    <property type="entry name" value="RIBOSOMAL_S15"/>
    <property type="match status" value="1"/>
</dbReference>
<accession>B1GZG7</accession>
<feature type="chain" id="PRO_1000143188" description="Small ribosomal subunit protein uS15">
    <location>
        <begin position="1"/>
        <end position="86"/>
    </location>
</feature>